<feature type="chain" id="PRO_1000047630" description="Glutamate racemase">
    <location>
        <begin position="1"/>
        <end position="264"/>
    </location>
</feature>
<feature type="active site" description="Proton donor/acceptor" evidence="1">
    <location>
        <position position="73"/>
    </location>
</feature>
<feature type="active site" description="Proton donor/acceptor" evidence="1">
    <location>
        <position position="183"/>
    </location>
</feature>
<feature type="binding site" evidence="1">
    <location>
        <begin position="10"/>
        <end position="11"/>
    </location>
    <ligand>
        <name>substrate</name>
    </ligand>
</feature>
<feature type="binding site" evidence="1">
    <location>
        <begin position="42"/>
        <end position="43"/>
    </location>
    <ligand>
        <name>substrate</name>
    </ligand>
</feature>
<feature type="binding site" evidence="1">
    <location>
        <begin position="74"/>
        <end position="75"/>
    </location>
    <ligand>
        <name>substrate</name>
    </ligand>
</feature>
<feature type="binding site" evidence="1">
    <location>
        <begin position="184"/>
        <end position="185"/>
    </location>
    <ligand>
        <name>substrate</name>
    </ligand>
</feature>
<gene>
    <name evidence="1" type="primary">murI</name>
    <name type="ordered locus">SSU05_1706</name>
</gene>
<sequence>MDNRPIGFLDSGVGGLTVARELMRQLPHEEIVYIGDSARAPYGPRPAEQIREYTWQLVNFLLTKNVKMIVFACNTATAVVWEEVKEKLDIPVLGVILPGASAAIKATQTGKVGVLGTAMTIQSDIYREKIQALSPETQVDSLACPKFAPLVESNSHQSSLAKKVVYETLRPLVGQVDTLVLGCTHYPLLRPIIQNAMGKDVKLIDSGAECARDISVLLNYFQINRSRTEKDIQHRFYTTASPAAFKEIAESWMGIDIHVEHVEL</sequence>
<organism>
    <name type="scientific">Streptococcus suis (strain 05ZYH33)</name>
    <dbReference type="NCBI Taxonomy" id="391295"/>
    <lineage>
        <taxon>Bacteria</taxon>
        <taxon>Bacillati</taxon>
        <taxon>Bacillota</taxon>
        <taxon>Bacilli</taxon>
        <taxon>Lactobacillales</taxon>
        <taxon>Streptococcaceae</taxon>
        <taxon>Streptococcus</taxon>
    </lineage>
</organism>
<comment type="function">
    <text evidence="1">Provides the (R)-glutamate required for cell wall biosynthesis.</text>
</comment>
<comment type="catalytic activity">
    <reaction evidence="1">
        <text>L-glutamate = D-glutamate</text>
        <dbReference type="Rhea" id="RHEA:12813"/>
        <dbReference type="ChEBI" id="CHEBI:29985"/>
        <dbReference type="ChEBI" id="CHEBI:29986"/>
        <dbReference type="EC" id="5.1.1.3"/>
    </reaction>
</comment>
<comment type="pathway">
    <text evidence="1">Cell wall biogenesis; peptidoglycan biosynthesis.</text>
</comment>
<comment type="similarity">
    <text evidence="1">Belongs to the aspartate/glutamate racemases family.</text>
</comment>
<reference key="1">
    <citation type="journal article" date="2007" name="PLoS ONE">
        <title>A glimpse of streptococcal toxic shock syndrome from comparative genomics of S. suis 2 Chinese isolates.</title>
        <authorList>
            <person name="Chen C."/>
            <person name="Tang J."/>
            <person name="Dong W."/>
            <person name="Wang C."/>
            <person name="Feng Y."/>
            <person name="Wang J."/>
            <person name="Zheng F."/>
            <person name="Pan X."/>
            <person name="Liu D."/>
            <person name="Li M."/>
            <person name="Song Y."/>
            <person name="Zhu X."/>
            <person name="Sun H."/>
            <person name="Feng T."/>
            <person name="Guo Z."/>
            <person name="Ju A."/>
            <person name="Ge J."/>
            <person name="Dong Y."/>
            <person name="Sun W."/>
            <person name="Jiang Y."/>
            <person name="Wang J."/>
            <person name="Yan J."/>
            <person name="Yang H."/>
            <person name="Wang X."/>
            <person name="Gao G.F."/>
            <person name="Yang R."/>
            <person name="Wang J."/>
            <person name="Yu J."/>
        </authorList>
    </citation>
    <scope>NUCLEOTIDE SEQUENCE [LARGE SCALE GENOMIC DNA]</scope>
    <source>
        <strain>05ZYH33</strain>
    </source>
</reference>
<keyword id="KW-0133">Cell shape</keyword>
<keyword id="KW-0961">Cell wall biogenesis/degradation</keyword>
<keyword id="KW-0413">Isomerase</keyword>
<keyword id="KW-0573">Peptidoglycan synthesis</keyword>
<name>MURI_STRSY</name>
<proteinExistence type="inferred from homology"/>
<dbReference type="EC" id="5.1.1.3" evidence="1"/>
<dbReference type="EMBL" id="CP000407">
    <property type="protein sequence ID" value="ABP90672.1"/>
    <property type="molecule type" value="Genomic_DNA"/>
</dbReference>
<dbReference type="SMR" id="A4VX33"/>
<dbReference type="STRING" id="391295.SSU05_1706"/>
<dbReference type="KEGG" id="ssu:SSU05_1706"/>
<dbReference type="eggNOG" id="COG0796">
    <property type="taxonomic scope" value="Bacteria"/>
</dbReference>
<dbReference type="HOGENOM" id="CLU_052344_0_2_9"/>
<dbReference type="UniPathway" id="UPA00219"/>
<dbReference type="GO" id="GO:0008881">
    <property type="term" value="F:glutamate racemase activity"/>
    <property type="evidence" value="ECO:0007669"/>
    <property type="project" value="UniProtKB-UniRule"/>
</dbReference>
<dbReference type="GO" id="GO:0071555">
    <property type="term" value="P:cell wall organization"/>
    <property type="evidence" value="ECO:0007669"/>
    <property type="project" value="UniProtKB-KW"/>
</dbReference>
<dbReference type="GO" id="GO:0009252">
    <property type="term" value="P:peptidoglycan biosynthetic process"/>
    <property type="evidence" value="ECO:0007669"/>
    <property type="project" value="UniProtKB-UniRule"/>
</dbReference>
<dbReference type="GO" id="GO:0008360">
    <property type="term" value="P:regulation of cell shape"/>
    <property type="evidence" value="ECO:0007669"/>
    <property type="project" value="UniProtKB-KW"/>
</dbReference>
<dbReference type="FunFam" id="3.40.50.1860:FF:000002">
    <property type="entry name" value="Glutamate racemase"/>
    <property type="match status" value="1"/>
</dbReference>
<dbReference type="Gene3D" id="3.40.50.1860">
    <property type="match status" value="2"/>
</dbReference>
<dbReference type="HAMAP" id="MF_00258">
    <property type="entry name" value="Glu_racemase"/>
    <property type="match status" value="1"/>
</dbReference>
<dbReference type="InterPro" id="IPR015942">
    <property type="entry name" value="Asp/Glu/hydantoin_racemase"/>
</dbReference>
<dbReference type="InterPro" id="IPR001920">
    <property type="entry name" value="Asp/Glu_race"/>
</dbReference>
<dbReference type="InterPro" id="IPR033134">
    <property type="entry name" value="Asp/Glu_racemase_AS_2"/>
</dbReference>
<dbReference type="InterPro" id="IPR004391">
    <property type="entry name" value="Glu_race"/>
</dbReference>
<dbReference type="NCBIfam" id="TIGR00067">
    <property type="entry name" value="glut_race"/>
    <property type="match status" value="1"/>
</dbReference>
<dbReference type="NCBIfam" id="NF002035">
    <property type="entry name" value="PRK00865.1-3"/>
    <property type="match status" value="1"/>
</dbReference>
<dbReference type="PANTHER" id="PTHR21198">
    <property type="entry name" value="GLUTAMATE RACEMASE"/>
    <property type="match status" value="1"/>
</dbReference>
<dbReference type="PANTHER" id="PTHR21198:SF2">
    <property type="entry name" value="GLUTAMATE RACEMASE"/>
    <property type="match status" value="1"/>
</dbReference>
<dbReference type="Pfam" id="PF01177">
    <property type="entry name" value="Asp_Glu_race"/>
    <property type="match status" value="1"/>
</dbReference>
<dbReference type="SUPFAM" id="SSF53681">
    <property type="entry name" value="Aspartate/glutamate racemase"/>
    <property type="match status" value="2"/>
</dbReference>
<dbReference type="PROSITE" id="PS00924">
    <property type="entry name" value="ASP_GLU_RACEMASE_2"/>
    <property type="match status" value="1"/>
</dbReference>
<protein>
    <recommendedName>
        <fullName evidence="1">Glutamate racemase</fullName>
        <ecNumber evidence="1">5.1.1.3</ecNumber>
    </recommendedName>
</protein>
<accession>A4VX33</accession>
<evidence type="ECO:0000255" key="1">
    <source>
        <dbReference type="HAMAP-Rule" id="MF_00258"/>
    </source>
</evidence>